<accession>Q4FPR8</accession>
<sequence length="478" mass="51660">MALANPDSLKNSNLSSLPTIAAIATPLGRGGVGVIRLSGTRAYSIACTLTGKSEFKPRMASFCRFYQADGTVVDEGLVLYFKGPHSFTGEDVIELQGHGGMILQNQLLARVFELGAKQAGAGEFSYRAFDNDKLDLVQAEAIADAIDATSAAAASSAIRSLSGEFSKKINQLLEQLIHLRLHVEAAIDFPDEEDVDFLSDGVIQGKLEQTQEKIQHVLATAKQGQLLRDGIHVVLAGRPNAGKSSLLNRLAGQERAIVTDVAGTTRDTLQETVVLNGLTLHLTDTAGLRETEDTVERIGIERARTAITQADILLMVYDVTCDLEEEITPLQLAEQLFGELPEAKCLLIIANKSDLLNHNSSKGMTSISQEEIYNRGYEQVNVSCETGAGIDDLVETLCAKVGFHPPENSLIARTRHLDALRRTAEYLAEAHEQLTVFKAGELVAESLRQAQHSLGEITGEFSADDLLGKIFGSFCIGK</sequence>
<gene>
    <name evidence="1" type="primary">mnmE</name>
    <name evidence="1" type="synonym">trmE</name>
    <name type="ordered locus">Psyc_2143</name>
</gene>
<feature type="chain" id="PRO_0000345877" description="tRNA modification GTPase MnmE">
    <location>
        <begin position="1"/>
        <end position="478"/>
    </location>
</feature>
<feature type="domain" description="TrmE-type G">
    <location>
        <begin position="230"/>
        <end position="402"/>
    </location>
</feature>
<feature type="binding site" evidence="1">
    <location>
        <position position="36"/>
    </location>
    <ligand>
        <name>(6S)-5-formyl-5,6,7,8-tetrahydrofolate</name>
        <dbReference type="ChEBI" id="CHEBI:57457"/>
    </ligand>
</feature>
<feature type="binding site" evidence="1">
    <location>
        <position position="94"/>
    </location>
    <ligand>
        <name>(6S)-5-formyl-5,6,7,8-tetrahydrofolate</name>
        <dbReference type="ChEBI" id="CHEBI:57457"/>
    </ligand>
</feature>
<feature type="binding site" evidence="1">
    <location>
        <position position="133"/>
    </location>
    <ligand>
        <name>(6S)-5-formyl-5,6,7,8-tetrahydrofolate</name>
        <dbReference type="ChEBI" id="CHEBI:57457"/>
    </ligand>
</feature>
<feature type="binding site" evidence="1">
    <location>
        <begin position="240"/>
        <end position="245"/>
    </location>
    <ligand>
        <name>GTP</name>
        <dbReference type="ChEBI" id="CHEBI:37565"/>
    </ligand>
</feature>
<feature type="binding site" evidence="1">
    <location>
        <position position="240"/>
    </location>
    <ligand>
        <name>K(+)</name>
        <dbReference type="ChEBI" id="CHEBI:29103"/>
    </ligand>
</feature>
<feature type="binding site" evidence="1">
    <location>
        <position position="244"/>
    </location>
    <ligand>
        <name>Mg(2+)</name>
        <dbReference type="ChEBI" id="CHEBI:18420"/>
    </ligand>
</feature>
<feature type="binding site" evidence="1">
    <location>
        <begin position="259"/>
        <end position="265"/>
    </location>
    <ligand>
        <name>GTP</name>
        <dbReference type="ChEBI" id="CHEBI:37565"/>
    </ligand>
</feature>
<feature type="binding site" evidence="1">
    <location>
        <position position="259"/>
    </location>
    <ligand>
        <name>K(+)</name>
        <dbReference type="ChEBI" id="CHEBI:29103"/>
    </ligand>
</feature>
<feature type="binding site" evidence="1">
    <location>
        <position position="261"/>
    </location>
    <ligand>
        <name>K(+)</name>
        <dbReference type="ChEBI" id="CHEBI:29103"/>
    </ligand>
</feature>
<feature type="binding site" evidence="1">
    <location>
        <position position="264"/>
    </location>
    <ligand>
        <name>K(+)</name>
        <dbReference type="ChEBI" id="CHEBI:29103"/>
    </ligand>
</feature>
<feature type="binding site" evidence="1">
    <location>
        <position position="265"/>
    </location>
    <ligand>
        <name>Mg(2+)</name>
        <dbReference type="ChEBI" id="CHEBI:18420"/>
    </ligand>
</feature>
<feature type="binding site" evidence="1">
    <location>
        <begin position="284"/>
        <end position="287"/>
    </location>
    <ligand>
        <name>GTP</name>
        <dbReference type="ChEBI" id="CHEBI:37565"/>
    </ligand>
</feature>
<feature type="binding site" evidence="1">
    <location>
        <position position="478"/>
    </location>
    <ligand>
        <name>(6S)-5-formyl-5,6,7,8-tetrahydrofolate</name>
        <dbReference type="ChEBI" id="CHEBI:57457"/>
    </ligand>
</feature>
<dbReference type="EC" id="3.6.-.-" evidence="1"/>
<dbReference type="EMBL" id="CP000082">
    <property type="protein sequence ID" value="AAZ19990.1"/>
    <property type="molecule type" value="Genomic_DNA"/>
</dbReference>
<dbReference type="RefSeq" id="WP_011281396.1">
    <property type="nucleotide sequence ID" value="NC_007204.1"/>
</dbReference>
<dbReference type="SMR" id="Q4FPR8"/>
<dbReference type="STRING" id="259536.Psyc_2143"/>
<dbReference type="KEGG" id="par:Psyc_2143"/>
<dbReference type="eggNOG" id="COG0486">
    <property type="taxonomic scope" value="Bacteria"/>
</dbReference>
<dbReference type="HOGENOM" id="CLU_019624_4_1_6"/>
<dbReference type="OrthoDB" id="9805918at2"/>
<dbReference type="Proteomes" id="UP000000546">
    <property type="component" value="Chromosome"/>
</dbReference>
<dbReference type="GO" id="GO:0005829">
    <property type="term" value="C:cytosol"/>
    <property type="evidence" value="ECO:0007669"/>
    <property type="project" value="TreeGrafter"/>
</dbReference>
<dbReference type="GO" id="GO:0005525">
    <property type="term" value="F:GTP binding"/>
    <property type="evidence" value="ECO:0007669"/>
    <property type="project" value="UniProtKB-UniRule"/>
</dbReference>
<dbReference type="GO" id="GO:0003924">
    <property type="term" value="F:GTPase activity"/>
    <property type="evidence" value="ECO:0007669"/>
    <property type="project" value="UniProtKB-UniRule"/>
</dbReference>
<dbReference type="GO" id="GO:0046872">
    <property type="term" value="F:metal ion binding"/>
    <property type="evidence" value="ECO:0007669"/>
    <property type="project" value="UniProtKB-KW"/>
</dbReference>
<dbReference type="GO" id="GO:0030488">
    <property type="term" value="P:tRNA methylation"/>
    <property type="evidence" value="ECO:0007669"/>
    <property type="project" value="TreeGrafter"/>
</dbReference>
<dbReference type="GO" id="GO:0002098">
    <property type="term" value="P:tRNA wobble uridine modification"/>
    <property type="evidence" value="ECO:0007669"/>
    <property type="project" value="TreeGrafter"/>
</dbReference>
<dbReference type="CDD" id="cd04164">
    <property type="entry name" value="trmE"/>
    <property type="match status" value="1"/>
</dbReference>
<dbReference type="CDD" id="cd14858">
    <property type="entry name" value="TrmE_N"/>
    <property type="match status" value="1"/>
</dbReference>
<dbReference type="FunFam" id="3.40.50.300:FF:001376">
    <property type="entry name" value="tRNA modification GTPase MnmE"/>
    <property type="match status" value="1"/>
</dbReference>
<dbReference type="Gene3D" id="3.40.50.300">
    <property type="entry name" value="P-loop containing nucleotide triphosphate hydrolases"/>
    <property type="match status" value="1"/>
</dbReference>
<dbReference type="Gene3D" id="3.30.1360.120">
    <property type="entry name" value="Probable tRNA modification gtpase trme, domain 1"/>
    <property type="match status" value="1"/>
</dbReference>
<dbReference type="Gene3D" id="1.20.120.430">
    <property type="entry name" value="tRNA modification GTPase MnmE domain 2"/>
    <property type="match status" value="1"/>
</dbReference>
<dbReference type="HAMAP" id="MF_00379">
    <property type="entry name" value="GTPase_MnmE"/>
    <property type="match status" value="1"/>
</dbReference>
<dbReference type="InterPro" id="IPR031168">
    <property type="entry name" value="G_TrmE"/>
</dbReference>
<dbReference type="InterPro" id="IPR006073">
    <property type="entry name" value="GTP-bd"/>
</dbReference>
<dbReference type="InterPro" id="IPR018948">
    <property type="entry name" value="GTP-bd_TrmE_N"/>
</dbReference>
<dbReference type="InterPro" id="IPR004520">
    <property type="entry name" value="GTPase_MnmE"/>
</dbReference>
<dbReference type="InterPro" id="IPR027368">
    <property type="entry name" value="MnmE_dom2"/>
</dbReference>
<dbReference type="InterPro" id="IPR025867">
    <property type="entry name" value="MnmE_helical"/>
</dbReference>
<dbReference type="InterPro" id="IPR027417">
    <property type="entry name" value="P-loop_NTPase"/>
</dbReference>
<dbReference type="InterPro" id="IPR005225">
    <property type="entry name" value="Small_GTP-bd"/>
</dbReference>
<dbReference type="InterPro" id="IPR027266">
    <property type="entry name" value="TrmE/GcvT_dom1"/>
</dbReference>
<dbReference type="NCBIfam" id="TIGR00450">
    <property type="entry name" value="mnmE_trmE_thdF"/>
    <property type="match status" value="1"/>
</dbReference>
<dbReference type="NCBIfam" id="NF003661">
    <property type="entry name" value="PRK05291.1-3"/>
    <property type="match status" value="1"/>
</dbReference>
<dbReference type="NCBIfam" id="TIGR00231">
    <property type="entry name" value="small_GTP"/>
    <property type="match status" value="1"/>
</dbReference>
<dbReference type="PANTHER" id="PTHR42714">
    <property type="entry name" value="TRNA MODIFICATION GTPASE GTPBP3"/>
    <property type="match status" value="1"/>
</dbReference>
<dbReference type="PANTHER" id="PTHR42714:SF2">
    <property type="entry name" value="TRNA MODIFICATION GTPASE GTPBP3, MITOCHONDRIAL"/>
    <property type="match status" value="1"/>
</dbReference>
<dbReference type="Pfam" id="PF01926">
    <property type="entry name" value="MMR_HSR1"/>
    <property type="match status" value="1"/>
</dbReference>
<dbReference type="Pfam" id="PF12631">
    <property type="entry name" value="MnmE_helical"/>
    <property type="match status" value="1"/>
</dbReference>
<dbReference type="Pfam" id="PF10396">
    <property type="entry name" value="TrmE_N"/>
    <property type="match status" value="1"/>
</dbReference>
<dbReference type="SUPFAM" id="SSF52540">
    <property type="entry name" value="P-loop containing nucleoside triphosphate hydrolases"/>
    <property type="match status" value="1"/>
</dbReference>
<dbReference type="SUPFAM" id="SSF116878">
    <property type="entry name" value="TrmE connector domain"/>
    <property type="match status" value="1"/>
</dbReference>
<dbReference type="PROSITE" id="PS51709">
    <property type="entry name" value="G_TRME"/>
    <property type="match status" value="1"/>
</dbReference>
<reference key="1">
    <citation type="journal article" date="2010" name="Appl. Environ. Microbiol.">
        <title>The genome sequence of Psychrobacter arcticus 273-4, a psychroactive Siberian permafrost bacterium, reveals mechanisms for adaptation to low-temperature growth.</title>
        <authorList>
            <person name="Ayala-del-Rio H.L."/>
            <person name="Chain P.S."/>
            <person name="Grzymski J.J."/>
            <person name="Ponder M.A."/>
            <person name="Ivanova N."/>
            <person name="Bergholz P.W."/>
            <person name="Di Bartolo G."/>
            <person name="Hauser L."/>
            <person name="Land M."/>
            <person name="Bakermans C."/>
            <person name="Rodrigues D."/>
            <person name="Klappenbach J."/>
            <person name="Zarka D."/>
            <person name="Larimer F."/>
            <person name="Richardson P."/>
            <person name="Murray A."/>
            <person name="Thomashow M."/>
            <person name="Tiedje J.M."/>
        </authorList>
    </citation>
    <scope>NUCLEOTIDE SEQUENCE [LARGE SCALE GENOMIC DNA]</scope>
    <source>
        <strain>DSM 17307 / VKM B-2377 / 273-4</strain>
    </source>
</reference>
<protein>
    <recommendedName>
        <fullName evidence="1">tRNA modification GTPase MnmE</fullName>
        <ecNumber evidence="1">3.6.-.-</ecNumber>
    </recommendedName>
</protein>
<keyword id="KW-0963">Cytoplasm</keyword>
<keyword id="KW-0342">GTP-binding</keyword>
<keyword id="KW-0378">Hydrolase</keyword>
<keyword id="KW-0460">Magnesium</keyword>
<keyword id="KW-0479">Metal-binding</keyword>
<keyword id="KW-0547">Nucleotide-binding</keyword>
<keyword id="KW-0630">Potassium</keyword>
<keyword id="KW-1185">Reference proteome</keyword>
<keyword id="KW-0819">tRNA processing</keyword>
<evidence type="ECO:0000255" key="1">
    <source>
        <dbReference type="HAMAP-Rule" id="MF_00379"/>
    </source>
</evidence>
<comment type="function">
    <text evidence="1">Exhibits a very high intrinsic GTPase hydrolysis rate. Involved in the addition of a carboxymethylaminomethyl (cmnm) group at the wobble position (U34) of certain tRNAs, forming tRNA-cmnm(5)s(2)U34.</text>
</comment>
<comment type="cofactor">
    <cofactor evidence="1">
        <name>K(+)</name>
        <dbReference type="ChEBI" id="CHEBI:29103"/>
    </cofactor>
    <text evidence="1">Binds 1 potassium ion per subunit.</text>
</comment>
<comment type="subunit">
    <text evidence="1">Homodimer. Heterotetramer of two MnmE and two MnmG subunits.</text>
</comment>
<comment type="subcellular location">
    <subcellularLocation>
        <location evidence="1">Cytoplasm</location>
    </subcellularLocation>
</comment>
<comment type="similarity">
    <text evidence="1">Belongs to the TRAFAC class TrmE-Era-EngA-EngB-Septin-like GTPase superfamily. TrmE GTPase family.</text>
</comment>
<organism>
    <name type="scientific">Psychrobacter arcticus (strain DSM 17307 / VKM B-2377 / 273-4)</name>
    <dbReference type="NCBI Taxonomy" id="259536"/>
    <lineage>
        <taxon>Bacteria</taxon>
        <taxon>Pseudomonadati</taxon>
        <taxon>Pseudomonadota</taxon>
        <taxon>Gammaproteobacteria</taxon>
        <taxon>Moraxellales</taxon>
        <taxon>Moraxellaceae</taxon>
        <taxon>Psychrobacter</taxon>
    </lineage>
</organism>
<name>MNME_PSYA2</name>
<proteinExistence type="inferred from homology"/>